<comment type="function">
    <text evidence="1">Forms oxaloacetate, a four-carbon dicarboxylic acid source for the tricarboxylic acid cycle.</text>
</comment>
<comment type="catalytic activity">
    <reaction evidence="1">
        <text>oxaloacetate + phosphate = phosphoenolpyruvate + hydrogencarbonate</text>
        <dbReference type="Rhea" id="RHEA:28370"/>
        <dbReference type="ChEBI" id="CHEBI:16452"/>
        <dbReference type="ChEBI" id="CHEBI:17544"/>
        <dbReference type="ChEBI" id="CHEBI:43474"/>
        <dbReference type="ChEBI" id="CHEBI:58702"/>
        <dbReference type="EC" id="4.1.1.31"/>
    </reaction>
</comment>
<comment type="cofactor">
    <cofactor evidence="1">
        <name>Mg(2+)</name>
        <dbReference type="ChEBI" id="CHEBI:18420"/>
    </cofactor>
</comment>
<comment type="similarity">
    <text evidence="1">Belongs to the PEPCase type 1 family.</text>
</comment>
<accession>Q93MH3</accession>
<feature type="chain" id="PRO_0000166588" description="Phosphoenolpyruvate carboxylase">
    <location>
        <begin position="1"/>
        <end position="919"/>
    </location>
</feature>
<feature type="active site" evidence="1">
    <location>
        <position position="138"/>
    </location>
</feature>
<feature type="active site" evidence="1">
    <location>
        <position position="579"/>
    </location>
</feature>
<keyword id="KW-0120">Carbon dioxide fixation</keyword>
<keyword id="KW-0456">Lyase</keyword>
<keyword id="KW-0460">Magnesium</keyword>
<reference key="1">
    <citation type="submission" date="2001-08" db="EMBL/GenBank/DDBJ databases">
        <title>Cloning and expression of phosphoenolpyruvate carboxylase-coding gene in Corynebacterium crenatum CD945.</title>
        <authorList>
            <person name="Liu Y."/>
            <person name="Ding J."/>
            <person name="Wang Y."/>
        </authorList>
    </citation>
    <scope>NUCLEOTIDE SEQUENCE [GENOMIC DNA]</scope>
    <source>
        <strain>CD945</strain>
    </source>
</reference>
<sequence>MTDFLRDDIRFLGRILGEVIAEQEGQEVYELVEQARLTSFDIAKGNAEMDSLVQVFDGITPAKATPIARAFSHFALLANLAEDLHDEELREQALDAGDTPPDSTLDATWLKLNEGNVGAEAVADVLRNAEVAPVLTAHPTETRRRTVFDAQKWITTHMRERHALQSAEPTARTQSKLDEIEKNIRRRITILWQTALIRVARPRIEDEIEVGLRYYKLSLLEEIPRINRDVAVELRERFGEDVPLKPVVKPGSWIGGDHDGNPYVTAGTVEYSTRRAAETVLKYYARQLHSLEHELSLSDRMNEVTPQLLELADAGHNDVPSRVDEPYRRAVHGVRGRILATTAELIGEDAVEGVWFKVFTPYASPEEFLNDALTIDHSLRESNDVLIADDRLSVLISAIESFGFNLYSLDLRQNSESYEDVLTELFERAQVTANYRELSEEEKLEVLLKELRSPRPLIPHGSDEYSEVTDRELGIFRTASEAVKKFGPRMVPHCIISMASSVTDVLEPMVLLKEFGLIAANGDNPRGTVDVIPLFETIEDLRAGAGILGELWKIDLYRNYLLQRDNVQEVMLGYSDSNKDGGYFSANWALYDAELQLVELCRSAGVKLRLFHGRGGTVGRGGGPSYDAILAQPKGAVQGSVRITEQGEIISAKYGNPETARRNLEALVSATLEASLLDVSELTDHQRAYDIMSEISELSLKKYTSLVHEDQGFIDYFTQSTPLQEIGSLNIGSRPSSRKQTSSVEDLRAIPWVLSWSQSRVMLPGWFGVGTALEQWIGEGEQATQRIAELQTLNESWPFFTSVLDNMAQVMSKAELRLAKLYADLIPDREVAERVYSVIHEEYFLTKKMFCVITGSDDLLDDNPLLARSVQRRYPYLLPLNVIQVEMMRRYRKGDQSEQVSRNIQLTMNGLSTALRNSG</sequence>
<dbReference type="EC" id="4.1.1.31" evidence="1"/>
<dbReference type="EMBL" id="AF406314">
    <property type="protein sequence ID" value="AAK92540.1"/>
    <property type="molecule type" value="Genomic_DNA"/>
</dbReference>
<dbReference type="RefSeq" id="WP_006284539.1">
    <property type="nucleotide sequence ID" value="NZ_LOQW01000008.1"/>
</dbReference>
<dbReference type="SMR" id="Q93MH3"/>
<dbReference type="GO" id="GO:0005829">
    <property type="term" value="C:cytosol"/>
    <property type="evidence" value="ECO:0007669"/>
    <property type="project" value="TreeGrafter"/>
</dbReference>
<dbReference type="GO" id="GO:0000287">
    <property type="term" value="F:magnesium ion binding"/>
    <property type="evidence" value="ECO:0007669"/>
    <property type="project" value="UniProtKB-UniRule"/>
</dbReference>
<dbReference type="GO" id="GO:0008964">
    <property type="term" value="F:phosphoenolpyruvate carboxylase activity"/>
    <property type="evidence" value="ECO:0007669"/>
    <property type="project" value="UniProtKB-UniRule"/>
</dbReference>
<dbReference type="GO" id="GO:0015977">
    <property type="term" value="P:carbon fixation"/>
    <property type="evidence" value="ECO:0007669"/>
    <property type="project" value="UniProtKB-UniRule"/>
</dbReference>
<dbReference type="GO" id="GO:0006107">
    <property type="term" value="P:oxaloacetate metabolic process"/>
    <property type="evidence" value="ECO:0007669"/>
    <property type="project" value="UniProtKB-UniRule"/>
</dbReference>
<dbReference type="GO" id="GO:0006099">
    <property type="term" value="P:tricarboxylic acid cycle"/>
    <property type="evidence" value="ECO:0007669"/>
    <property type="project" value="InterPro"/>
</dbReference>
<dbReference type="Gene3D" id="1.20.1440.90">
    <property type="entry name" value="Phosphoenolpyruvate/pyruvate domain"/>
    <property type="match status" value="1"/>
</dbReference>
<dbReference type="HAMAP" id="MF_00595">
    <property type="entry name" value="PEPcase_type1"/>
    <property type="match status" value="1"/>
</dbReference>
<dbReference type="InterPro" id="IPR021135">
    <property type="entry name" value="PEP_COase"/>
</dbReference>
<dbReference type="InterPro" id="IPR022805">
    <property type="entry name" value="PEP_COase_bac/pln-type"/>
</dbReference>
<dbReference type="InterPro" id="IPR018129">
    <property type="entry name" value="PEP_COase_Lys_AS"/>
</dbReference>
<dbReference type="InterPro" id="IPR033129">
    <property type="entry name" value="PEPCASE_His_AS"/>
</dbReference>
<dbReference type="InterPro" id="IPR015813">
    <property type="entry name" value="Pyrv/PenolPyrv_kinase-like_dom"/>
</dbReference>
<dbReference type="NCBIfam" id="NF000584">
    <property type="entry name" value="PRK00009.1"/>
    <property type="match status" value="1"/>
</dbReference>
<dbReference type="PANTHER" id="PTHR30523">
    <property type="entry name" value="PHOSPHOENOLPYRUVATE CARBOXYLASE"/>
    <property type="match status" value="1"/>
</dbReference>
<dbReference type="PANTHER" id="PTHR30523:SF6">
    <property type="entry name" value="PHOSPHOENOLPYRUVATE CARBOXYLASE"/>
    <property type="match status" value="1"/>
</dbReference>
<dbReference type="Pfam" id="PF00311">
    <property type="entry name" value="PEPcase"/>
    <property type="match status" value="1"/>
</dbReference>
<dbReference type="PRINTS" id="PR00150">
    <property type="entry name" value="PEPCARBXLASE"/>
</dbReference>
<dbReference type="SUPFAM" id="SSF51621">
    <property type="entry name" value="Phosphoenolpyruvate/pyruvate domain"/>
    <property type="match status" value="1"/>
</dbReference>
<dbReference type="PROSITE" id="PS00781">
    <property type="entry name" value="PEPCASE_1"/>
    <property type="match status" value="1"/>
</dbReference>
<dbReference type="PROSITE" id="PS00393">
    <property type="entry name" value="PEPCASE_2"/>
    <property type="match status" value="1"/>
</dbReference>
<proteinExistence type="inferred from homology"/>
<organism>
    <name type="scientific">Corynebacterium glutamicum</name>
    <name type="common">Brevibacterium saccharolyticum</name>
    <dbReference type="NCBI Taxonomy" id="1718"/>
    <lineage>
        <taxon>Bacteria</taxon>
        <taxon>Bacillati</taxon>
        <taxon>Actinomycetota</taxon>
        <taxon>Actinomycetes</taxon>
        <taxon>Mycobacteriales</taxon>
        <taxon>Corynebacteriaceae</taxon>
        <taxon>Corynebacterium</taxon>
    </lineage>
</organism>
<protein>
    <recommendedName>
        <fullName evidence="1">Phosphoenolpyruvate carboxylase</fullName>
        <shortName evidence="1">PEPC</shortName>
        <shortName evidence="1">PEPCase</shortName>
        <ecNumber evidence="1">4.1.1.31</ecNumber>
    </recommendedName>
</protein>
<name>CAPP_CORGT</name>
<evidence type="ECO:0000255" key="1">
    <source>
        <dbReference type="HAMAP-Rule" id="MF_00595"/>
    </source>
</evidence>
<gene>
    <name evidence="1" type="primary">ppc</name>
</gene>